<keyword id="KW-0217">Developmental protein</keyword>
<keyword id="KW-1015">Disulfide bond</keyword>
<keyword id="KW-1185">Reference proteome</keyword>
<keyword id="KW-0732">Signal</keyword>
<comment type="function">
    <text evidence="3">Maternally-contributed central cell peptide regulating suspensor development and correct auxin distribution in early developing embryos.</text>
</comment>
<comment type="tissue specificity">
    <text evidence="3">Expressed exclusively in ovule embryo sacs and in early developing endosperms.</text>
</comment>
<comment type="developmental stage">
    <text evidence="3">Primarily expressed in the central cell gamete of nonfrtilized ovules, which upon fertilization gives rise to the endosperm, and later in the micropylar endosperm, which surrounds the embryo.</text>
</comment>
<comment type="disruption phenotype">
    <text evidence="3">No visible phenotype, due to redundancy with ESF1.2 and ESF1.3. Simultaneous down-regulation of all 3 genes by RNAi induces embryo abnormalities.</text>
</comment>
<comment type="similarity">
    <text evidence="4">Belongs to the MEG family.</text>
</comment>
<proteinExistence type="evidence at transcript level"/>
<dbReference type="EMBL" id="AC007354">
    <property type="status" value="NOT_ANNOTATED_CDS"/>
    <property type="molecule type" value="Genomic_DNA"/>
</dbReference>
<dbReference type="EMBL" id="AC009398">
    <property type="status" value="NOT_ANNOTATED_CDS"/>
    <property type="molecule type" value="Genomic_DNA"/>
</dbReference>
<dbReference type="EMBL" id="CP002684">
    <property type="protein sequence ID" value="AEE28641.1"/>
    <property type="molecule type" value="Genomic_DNA"/>
</dbReference>
<dbReference type="RefSeq" id="NP_001077511.1">
    <property type="nucleotide sequence ID" value="NM_001084042.2"/>
</dbReference>
<dbReference type="SMR" id="A8MSA6"/>
<dbReference type="STRING" id="3702.A8MSA6"/>
<dbReference type="PaxDb" id="3702-AT1G10747.1"/>
<dbReference type="EnsemblPlants" id="AT1G10747.1">
    <property type="protein sequence ID" value="AT1G10747.1"/>
    <property type="gene ID" value="AT1G10747"/>
</dbReference>
<dbReference type="GeneID" id="5007680"/>
<dbReference type="Gramene" id="AT1G10747.1">
    <property type="protein sequence ID" value="AT1G10747.1"/>
    <property type="gene ID" value="AT1G10747"/>
</dbReference>
<dbReference type="KEGG" id="ath:AT1G10747"/>
<dbReference type="Araport" id="AT1G10747"/>
<dbReference type="TAIR" id="AT1G10747">
    <property type="gene designation" value="ESF1.1"/>
</dbReference>
<dbReference type="HOGENOM" id="CLU_183999_1_0_1"/>
<dbReference type="InParanoid" id="A8MSA6"/>
<dbReference type="OMA" id="WHDREIC"/>
<dbReference type="PhylomeDB" id="A8MSA6"/>
<dbReference type="PRO" id="PR:A8MSA6"/>
<dbReference type="Proteomes" id="UP000006548">
    <property type="component" value="Chromosome 1"/>
</dbReference>
<dbReference type="ExpressionAtlas" id="A8MSA6">
    <property type="expression patterns" value="baseline"/>
</dbReference>
<dbReference type="GO" id="GO:0000578">
    <property type="term" value="P:embryonic axis specification"/>
    <property type="evidence" value="ECO:0000315"/>
    <property type="project" value="UniProtKB"/>
</dbReference>
<dbReference type="GO" id="GO:0010098">
    <property type="term" value="P:suspensor development"/>
    <property type="evidence" value="ECO:0000315"/>
    <property type="project" value="UniProtKB"/>
</dbReference>
<dbReference type="InterPro" id="IPR041608">
    <property type="entry name" value="ESF1_brassicaceae"/>
</dbReference>
<dbReference type="Pfam" id="PF18209">
    <property type="entry name" value="ESF1"/>
    <property type="match status" value="1"/>
</dbReference>
<organism>
    <name type="scientific">Arabidopsis thaliana</name>
    <name type="common">Mouse-ear cress</name>
    <dbReference type="NCBI Taxonomy" id="3702"/>
    <lineage>
        <taxon>Eukaryota</taxon>
        <taxon>Viridiplantae</taxon>
        <taxon>Streptophyta</taxon>
        <taxon>Embryophyta</taxon>
        <taxon>Tracheophyta</taxon>
        <taxon>Spermatophyta</taxon>
        <taxon>Magnoliopsida</taxon>
        <taxon>eudicotyledons</taxon>
        <taxon>Gunneridae</taxon>
        <taxon>Pentapetalae</taxon>
        <taxon>rosids</taxon>
        <taxon>malvids</taxon>
        <taxon>Brassicales</taxon>
        <taxon>Brassicaceae</taxon>
        <taxon>Camelineae</taxon>
        <taxon>Arabidopsis</taxon>
    </lineage>
</organism>
<accession>A8MSA6</accession>
<feature type="signal peptide" evidence="2">
    <location>
        <begin position="1"/>
        <end position="22"/>
    </location>
</feature>
<feature type="chain" id="PRO_0000430059" description="EMBRYO SURROUNDING FACTOR 1.1">
    <location>
        <begin position="23"/>
        <end position="83"/>
    </location>
</feature>
<feature type="disulfide bond" evidence="1">
    <location>
        <begin position="41"/>
        <end position="56"/>
    </location>
</feature>
<feature type="disulfide bond" evidence="1">
    <location>
        <begin position="46"/>
        <end position="75"/>
    </location>
</feature>
<feature type="disulfide bond" evidence="1">
    <location>
        <begin position="54"/>
        <end position="71"/>
    </location>
</feature>
<feature type="disulfide bond" evidence="1">
    <location>
        <begin position="57"/>
        <end position="64"/>
    </location>
</feature>
<sequence length="83" mass="9551">MKSSHTSLICILMLSLVALHQCVRMKVKEIGRSNKIYIPPCFRDSCDHVLKKDCYCCGSKPDLCWEDQHYCNTHCPPLKPLIN</sequence>
<evidence type="ECO:0000250" key="1"/>
<evidence type="ECO:0000255" key="2"/>
<evidence type="ECO:0000269" key="3">
    <source>
    </source>
</evidence>
<evidence type="ECO:0000305" key="4"/>
<protein>
    <recommendedName>
        <fullName>EMBRYO SURROUNDING FACTOR 1.1</fullName>
    </recommendedName>
    <alternativeName>
        <fullName>Maternally expressed family protein 1.1</fullName>
    </alternativeName>
    <alternativeName>
        <fullName>Maternally expressed gene 1.1</fullName>
    </alternativeName>
</protein>
<name>ESF11_ARATH</name>
<reference key="1">
    <citation type="journal article" date="2000" name="Nature">
        <title>Sequence and analysis of chromosome 1 of the plant Arabidopsis thaliana.</title>
        <authorList>
            <person name="Theologis A."/>
            <person name="Ecker J.R."/>
            <person name="Palm C.J."/>
            <person name="Federspiel N.A."/>
            <person name="Kaul S."/>
            <person name="White O."/>
            <person name="Alonso J."/>
            <person name="Altafi H."/>
            <person name="Araujo R."/>
            <person name="Bowman C.L."/>
            <person name="Brooks S.Y."/>
            <person name="Buehler E."/>
            <person name="Chan A."/>
            <person name="Chao Q."/>
            <person name="Chen H."/>
            <person name="Cheuk R.F."/>
            <person name="Chin C.W."/>
            <person name="Chung M.K."/>
            <person name="Conn L."/>
            <person name="Conway A.B."/>
            <person name="Conway A.R."/>
            <person name="Creasy T.H."/>
            <person name="Dewar K."/>
            <person name="Dunn P."/>
            <person name="Etgu P."/>
            <person name="Feldblyum T.V."/>
            <person name="Feng J.-D."/>
            <person name="Fong B."/>
            <person name="Fujii C.Y."/>
            <person name="Gill J.E."/>
            <person name="Goldsmith A.D."/>
            <person name="Haas B."/>
            <person name="Hansen N.F."/>
            <person name="Hughes B."/>
            <person name="Huizar L."/>
            <person name="Hunter J.L."/>
            <person name="Jenkins J."/>
            <person name="Johnson-Hopson C."/>
            <person name="Khan S."/>
            <person name="Khaykin E."/>
            <person name="Kim C.J."/>
            <person name="Koo H.L."/>
            <person name="Kremenetskaia I."/>
            <person name="Kurtz D.B."/>
            <person name="Kwan A."/>
            <person name="Lam B."/>
            <person name="Langin-Hooper S."/>
            <person name="Lee A."/>
            <person name="Lee J.M."/>
            <person name="Lenz C.A."/>
            <person name="Li J.H."/>
            <person name="Li Y.-P."/>
            <person name="Lin X."/>
            <person name="Liu S.X."/>
            <person name="Liu Z.A."/>
            <person name="Luros J.S."/>
            <person name="Maiti R."/>
            <person name="Marziali A."/>
            <person name="Militscher J."/>
            <person name="Miranda M."/>
            <person name="Nguyen M."/>
            <person name="Nierman W.C."/>
            <person name="Osborne B.I."/>
            <person name="Pai G."/>
            <person name="Peterson J."/>
            <person name="Pham P.K."/>
            <person name="Rizzo M."/>
            <person name="Rooney T."/>
            <person name="Rowley D."/>
            <person name="Sakano H."/>
            <person name="Salzberg S.L."/>
            <person name="Schwartz J.R."/>
            <person name="Shinn P."/>
            <person name="Southwick A.M."/>
            <person name="Sun H."/>
            <person name="Tallon L.J."/>
            <person name="Tambunga G."/>
            <person name="Toriumi M.J."/>
            <person name="Town C.D."/>
            <person name="Utterback T."/>
            <person name="Van Aken S."/>
            <person name="Vaysberg M."/>
            <person name="Vysotskaia V.S."/>
            <person name="Walker M."/>
            <person name="Wu D."/>
            <person name="Yu G."/>
            <person name="Fraser C.M."/>
            <person name="Venter J.C."/>
            <person name="Davis R.W."/>
        </authorList>
    </citation>
    <scope>NUCLEOTIDE SEQUENCE [LARGE SCALE GENOMIC DNA]</scope>
    <source>
        <strain>cv. Columbia</strain>
    </source>
</reference>
<reference key="2">
    <citation type="journal article" date="2017" name="Plant J.">
        <title>Araport11: a complete reannotation of the Arabidopsis thaliana reference genome.</title>
        <authorList>
            <person name="Cheng C.Y."/>
            <person name="Krishnakumar V."/>
            <person name="Chan A.P."/>
            <person name="Thibaud-Nissen F."/>
            <person name="Schobel S."/>
            <person name="Town C.D."/>
        </authorList>
    </citation>
    <scope>GENOME REANNOTATION</scope>
    <source>
        <strain>cv. Columbia</strain>
    </source>
</reference>
<reference key="3">
    <citation type="journal article" date="2014" name="Science">
        <title>Central cell-derived peptides regulate early embryo patterning in flowering plants.</title>
        <authorList>
            <person name="Costa L.M."/>
            <person name="Marshall E."/>
            <person name="Tesfaye M."/>
            <person name="Silverstein K.A."/>
            <person name="Mori M."/>
            <person name="Umetsu Y."/>
            <person name="Otterbach S.L."/>
            <person name="Papareddy R."/>
            <person name="Dickinson H.G."/>
            <person name="Boutiller K."/>
            <person name="VandenBosch K.A."/>
            <person name="Ohki S."/>
            <person name="Gutierrez-Marcos J.F."/>
        </authorList>
    </citation>
    <scope>FUNCTION</scope>
    <scope>TISSUE SPECIFICITY</scope>
    <scope>DEVELOPMENTAL STAGE</scope>
    <scope>DISRUPTION PHENOTYPE</scope>
</reference>
<gene>
    <name type="primary">ESF1.1</name>
    <name type="synonym">MEG1.1</name>
    <name type="ordered locus">At1g10747</name>
    <name type="ORF">F20B24</name>
    <name type="ORF">T16B5</name>
</gene>